<dbReference type="EMBL" id="U05664">
    <property type="protein sequence ID" value="AAA73413.1"/>
    <property type="molecule type" value="Unassigned_DNA"/>
</dbReference>
<dbReference type="EMBL" id="CP000077">
    <property type="protein sequence ID" value="AAY80984.1"/>
    <property type="molecule type" value="Genomic_DNA"/>
</dbReference>
<dbReference type="RefSeq" id="WP_011278486.1">
    <property type="nucleotide sequence ID" value="NC_007181.1"/>
</dbReference>
<dbReference type="SMR" id="P46218"/>
<dbReference type="STRING" id="330779.Saci_1674"/>
<dbReference type="GeneID" id="14552165"/>
<dbReference type="KEGG" id="sai:Saci_1674"/>
<dbReference type="PATRIC" id="fig|330779.12.peg.1609"/>
<dbReference type="eggNOG" id="arCOG05370">
    <property type="taxonomic scope" value="Archaea"/>
</dbReference>
<dbReference type="HOGENOM" id="CLU_036110_3_1_2"/>
<dbReference type="Proteomes" id="UP000001018">
    <property type="component" value="Chromosome"/>
</dbReference>
<dbReference type="GO" id="GO:0005509">
    <property type="term" value="F:calcium ion binding"/>
    <property type="evidence" value="ECO:0007669"/>
    <property type="project" value="TreeGrafter"/>
</dbReference>
<dbReference type="GO" id="GO:0004341">
    <property type="term" value="F:gluconolactonase activity"/>
    <property type="evidence" value="ECO:0007669"/>
    <property type="project" value="TreeGrafter"/>
</dbReference>
<dbReference type="GO" id="GO:0019853">
    <property type="term" value="P:L-ascorbic acid biosynthetic process"/>
    <property type="evidence" value="ECO:0007669"/>
    <property type="project" value="TreeGrafter"/>
</dbReference>
<dbReference type="Gene3D" id="2.120.10.30">
    <property type="entry name" value="TolB, C-terminal domain"/>
    <property type="match status" value="1"/>
</dbReference>
<dbReference type="InterPro" id="IPR011042">
    <property type="entry name" value="6-blade_b-propeller_TolB-like"/>
</dbReference>
<dbReference type="InterPro" id="IPR013658">
    <property type="entry name" value="SGL"/>
</dbReference>
<dbReference type="InterPro" id="IPR005511">
    <property type="entry name" value="SMP-30"/>
</dbReference>
<dbReference type="PANTHER" id="PTHR10907">
    <property type="entry name" value="REGUCALCIN"/>
    <property type="match status" value="1"/>
</dbReference>
<dbReference type="PANTHER" id="PTHR10907:SF47">
    <property type="entry name" value="REGUCALCIN"/>
    <property type="match status" value="1"/>
</dbReference>
<dbReference type="Pfam" id="PF08450">
    <property type="entry name" value="SGL"/>
    <property type="match status" value="1"/>
</dbReference>
<dbReference type="PRINTS" id="PR01790">
    <property type="entry name" value="SMP30FAMILY"/>
</dbReference>
<dbReference type="SUPFAM" id="SSF63829">
    <property type="entry name" value="Calcium-dependent phosphotriesterase"/>
    <property type="match status" value="1"/>
</dbReference>
<name>Y1674_SULAC</name>
<organism>
    <name type="scientific">Sulfolobus acidocaldarius (strain ATCC 33909 / DSM 639 / JCM 8929 / NBRC 15157 / NCIMB 11770)</name>
    <dbReference type="NCBI Taxonomy" id="330779"/>
    <lineage>
        <taxon>Archaea</taxon>
        <taxon>Thermoproteota</taxon>
        <taxon>Thermoprotei</taxon>
        <taxon>Sulfolobales</taxon>
        <taxon>Sulfolobaceae</taxon>
        <taxon>Sulfolobus</taxon>
    </lineage>
</organism>
<accession>P46218</accession>
<accession>Q4J897</accession>
<feature type="chain" id="PRO_0000173050" description="Uncharacterized protein Saci_1674">
    <location>
        <begin position="1"/>
        <end position="275"/>
    </location>
</feature>
<feature type="sequence conflict" description="In Ref. 1; AAA73413." evidence="1" ref="1">
    <original>A</original>
    <variation>V</variation>
    <location>
        <position position="43"/>
    </location>
</feature>
<protein>
    <recommendedName>
        <fullName>Uncharacterized protein Saci_1674</fullName>
    </recommendedName>
</protein>
<gene>
    <name type="ordered locus">Saci_1674</name>
</gene>
<reference key="1">
    <citation type="submission" date="1994-01" db="EMBL/GenBank/DDBJ databases">
        <title>A 275 amino acid protein from Sulfolobus acidocaldarius may be one of a family of archaeal RNAP homologs.</title>
        <authorList>
            <person name="Durovic P.V."/>
            <person name="Potter S."/>
            <person name="Dennis P.P."/>
        </authorList>
    </citation>
    <scope>NUCLEOTIDE SEQUENCE [GENOMIC DNA]</scope>
</reference>
<reference key="2">
    <citation type="journal article" date="2005" name="J. Bacteriol.">
        <title>The genome of Sulfolobus acidocaldarius, a model organism of the Crenarchaeota.</title>
        <authorList>
            <person name="Chen L."/>
            <person name="Bruegger K."/>
            <person name="Skovgaard M."/>
            <person name="Redder P."/>
            <person name="She Q."/>
            <person name="Torarinsson E."/>
            <person name="Greve B."/>
            <person name="Awayez M."/>
            <person name="Zibat A."/>
            <person name="Klenk H.-P."/>
            <person name="Garrett R.A."/>
        </authorList>
    </citation>
    <scope>NUCLEOTIDE SEQUENCE [LARGE SCALE GENOMIC DNA]</scope>
    <source>
        <strain>ATCC 33909 / DSM 639 / JCM 8929 / NBRC 15157 / NCIMB 11770</strain>
    </source>
</reference>
<comment type="similarity">
    <text evidence="1">Belongs to the SMP-30/CGR1 family.</text>
</comment>
<comment type="caution">
    <text evidence="1">Was originally (Ref.1) thought to be an RNA polymerase subunit.</text>
</comment>
<evidence type="ECO:0000305" key="1"/>
<keyword id="KW-1185">Reference proteome</keyword>
<sequence length="275" mass="31516">MIRIFNQKGKLYEGPIWAYNSLYFVDIPKGELHNLKEDGTHWAVKFPTYVSSLQPTKRGGIIVTAGNGFYLVKDKDQISLLYEVKDWDSRNRFNDGKCDQMGRYWIGTMNLEEKYPTGGLFVLDLDMKFRRVLTDVTISNGLAWSLDNKYLYYIDSPTRKIFKFKFDLERGDISQREVLIDLKEYEGVPDGMTIDSEGNLWVALYGGGAVLRIDVEKRKVIQELRLPAPRVTSVIFGGSNMDTLFITTANDHPDGGFVYSERVDVKGVETYYCGF</sequence>
<proteinExistence type="inferred from homology"/>